<feature type="chain" id="PRO_0000134438" description="Isopentenyl-diphosphate delta-isomerase">
    <location>
        <begin position="1"/>
        <end position="349"/>
    </location>
</feature>
<feature type="binding site" evidence="1">
    <location>
        <begin position="7"/>
        <end position="8"/>
    </location>
    <ligand>
        <name>substrate</name>
    </ligand>
</feature>
<feature type="binding site" evidence="1">
    <location>
        <position position="65"/>
    </location>
    <ligand>
        <name>FMN</name>
        <dbReference type="ChEBI" id="CHEBI:58210"/>
    </ligand>
</feature>
<feature type="binding site" evidence="1">
    <location>
        <begin position="66"/>
        <end position="68"/>
    </location>
    <ligand>
        <name>FMN</name>
        <dbReference type="ChEBI" id="CHEBI:58210"/>
    </ligand>
</feature>
<feature type="binding site" evidence="1">
    <location>
        <begin position="96"/>
        <end position="98"/>
    </location>
    <ligand>
        <name>substrate</name>
    </ligand>
</feature>
<feature type="binding site" evidence="1">
    <location>
        <position position="96"/>
    </location>
    <ligand>
        <name>FMN</name>
        <dbReference type="ChEBI" id="CHEBI:58210"/>
    </ligand>
</feature>
<feature type="binding site" evidence="1">
    <location>
        <position position="124"/>
    </location>
    <ligand>
        <name>FMN</name>
        <dbReference type="ChEBI" id="CHEBI:58210"/>
    </ligand>
</feature>
<feature type="binding site" evidence="1">
    <location>
        <position position="159"/>
    </location>
    <ligand>
        <name>substrate</name>
    </ligand>
</feature>
<feature type="binding site" evidence="1">
    <location>
        <position position="160"/>
    </location>
    <ligand>
        <name>Mg(2+)</name>
        <dbReference type="ChEBI" id="CHEBI:18420"/>
    </ligand>
</feature>
<feature type="binding site" evidence="1">
    <location>
        <position position="191"/>
    </location>
    <ligand>
        <name>FMN</name>
        <dbReference type="ChEBI" id="CHEBI:58210"/>
    </ligand>
</feature>
<feature type="binding site" evidence="1">
    <location>
        <position position="221"/>
    </location>
    <ligand>
        <name>FMN</name>
        <dbReference type="ChEBI" id="CHEBI:58210"/>
    </ligand>
</feature>
<feature type="binding site" evidence="1">
    <location>
        <begin position="271"/>
        <end position="273"/>
    </location>
    <ligand>
        <name>FMN</name>
        <dbReference type="ChEBI" id="CHEBI:58210"/>
    </ligand>
</feature>
<feature type="binding site" evidence="1">
    <location>
        <begin position="292"/>
        <end position="293"/>
    </location>
    <ligand>
        <name>FMN</name>
        <dbReference type="ChEBI" id="CHEBI:58210"/>
    </ligand>
</feature>
<organism>
    <name type="scientific">Synechocystis sp. (strain ATCC 27184 / PCC 6803 / Kazusa)</name>
    <dbReference type="NCBI Taxonomy" id="1111708"/>
    <lineage>
        <taxon>Bacteria</taxon>
        <taxon>Bacillati</taxon>
        <taxon>Cyanobacteriota</taxon>
        <taxon>Cyanophyceae</taxon>
        <taxon>Synechococcales</taxon>
        <taxon>Merismopediaceae</taxon>
        <taxon>Synechocystis</taxon>
    </lineage>
</organism>
<comment type="function">
    <text evidence="1">Involved in the biosynthesis of isoprenoids. Catalyzes the 1,3-allylic rearrangement of the homoallylic substrate isopentenyl (IPP) to its allylic isomer, dimethylallyl diphosphate (DMAPP).</text>
</comment>
<comment type="catalytic activity">
    <reaction evidence="1">
        <text>isopentenyl diphosphate = dimethylallyl diphosphate</text>
        <dbReference type="Rhea" id="RHEA:23284"/>
        <dbReference type="ChEBI" id="CHEBI:57623"/>
        <dbReference type="ChEBI" id="CHEBI:128769"/>
        <dbReference type="EC" id="5.3.3.2"/>
    </reaction>
</comment>
<comment type="cofactor">
    <cofactor evidence="1">
        <name>FMN</name>
        <dbReference type="ChEBI" id="CHEBI:58210"/>
    </cofactor>
</comment>
<comment type="cofactor">
    <cofactor evidence="1">
        <name>NADPH</name>
        <dbReference type="ChEBI" id="CHEBI:57783"/>
    </cofactor>
</comment>
<comment type="cofactor">
    <cofactor evidence="1">
        <name>Mg(2+)</name>
        <dbReference type="ChEBI" id="CHEBI:18420"/>
    </cofactor>
</comment>
<comment type="subunit">
    <text evidence="1">Homooctamer. Dimer of tetramers.</text>
</comment>
<comment type="subcellular location">
    <subcellularLocation>
        <location evidence="1">Cytoplasm</location>
    </subcellularLocation>
</comment>
<comment type="similarity">
    <text evidence="1">Belongs to the IPP isomerase type 2 family.</text>
</comment>
<proteinExistence type="inferred from homology"/>
<evidence type="ECO:0000255" key="1">
    <source>
        <dbReference type="HAMAP-Rule" id="MF_00354"/>
    </source>
</evidence>
<protein>
    <recommendedName>
        <fullName evidence="1">Isopentenyl-diphosphate delta-isomerase</fullName>
        <shortName evidence="1">IPP isomerase</shortName>
        <ecNumber evidence="1">5.3.3.2</ecNumber>
    </recommendedName>
    <alternativeName>
        <fullName evidence="1">Isopentenyl diphosphate:dimethylallyl diphosphate isomerase</fullName>
    </alternativeName>
    <alternativeName>
        <fullName evidence="1">Isopentenyl pyrophosphate isomerase</fullName>
    </alternativeName>
    <alternativeName>
        <fullName evidence="1">Type 2 isopentenyl diphosphate isomerase</fullName>
        <shortName evidence="1">IDI-2</shortName>
    </alternativeName>
</protein>
<dbReference type="EC" id="5.3.3.2" evidence="1"/>
<dbReference type="EMBL" id="BA000022">
    <property type="protein sequence ID" value="BAA18381.1"/>
    <property type="molecule type" value="Genomic_DNA"/>
</dbReference>
<dbReference type="PIR" id="S75922">
    <property type="entry name" value="S75922"/>
</dbReference>
<dbReference type="SMR" id="P74287"/>
<dbReference type="FunCoup" id="P74287">
    <property type="interactions" value="65"/>
</dbReference>
<dbReference type="IntAct" id="P74287">
    <property type="interactions" value="1"/>
</dbReference>
<dbReference type="STRING" id="1148.gene:10499257"/>
<dbReference type="PaxDb" id="1148-1653467"/>
<dbReference type="EnsemblBacteria" id="BAA18381">
    <property type="protein sequence ID" value="BAA18381"/>
    <property type="gene ID" value="BAA18381"/>
</dbReference>
<dbReference type="KEGG" id="syn:sll1556"/>
<dbReference type="eggNOG" id="COG1304">
    <property type="taxonomic scope" value="Bacteria"/>
</dbReference>
<dbReference type="InParanoid" id="P74287"/>
<dbReference type="PhylomeDB" id="P74287"/>
<dbReference type="Proteomes" id="UP000001425">
    <property type="component" value="Chromosome"/>
</dbReference>
<dbReference type="GO" id="GO:0005737">
    <property type="term" value="C:cytoplasm"/>
    <property type="evidence" value="ECO:0007669"/>
    <property type="project" value="UniProtKB-SubCell"/>
</dbReference>
<dbReference type="GO" id="GO:0010181">
    <property type="term" value="F:FMN binding"/>
    <property type="evidence" value="ECO:0007669"/>
    <property type="project" value="UniProtKB-UniRule"/>
</dbReference>
<dbReference type="GO" id="GO:0004452">
    <property type="term" value="F:isopentenyl-diphosphate delta-isomerase activity"/>
    <property type="evidence" value="ECO:0007669"/>
    <property type="project" value="UniProtKB-UniRule"/>
</dbReference>
<dbReference type="GO" id="GO:0000287">
    <property type="term" value="F:magnesium ion binding"/>
    <property type="evidence" value="ECO:0007669"/>
    <property type="project" value="UniProtKB-UniRule"/>
</dbReference>
<dbReference type="GO" id="GO:0070402">
    <property type="term" value="F:NADPH binding"/>
    <property type="evidence" value="ECO:0007669"/>
    <property type="project" value="UniProtKB-UniRule"/>
</dbReference>
<dbReference type="GO" id="GO:0016491">
    <property type="term" value="F:oxidoreductase activity"/>
    <property type="evidence" value="ECO:0007669"/>
    <property type="project" value="InterPro"/>
</dbReference>
<dbReference type="GO" id="GO:0008299">
    <property type="term" value="P:isoprenoid biosynthetic process"/>
    <property type="evidence" value="ECO:0007669"/>
    <property type="project" value="UniProtKB-UniRule"/>
</dbReference>
<dbReference type="CDD" id="cd02811">
    <property type="entry name" value="IDI-2_FMN"/>
    <property type="match status" value="1"/>
</dbReference>
<dbReference type="Gene3D" id="3.20.20.70">
    <property type="entry name" value="Aldolase class I"/>
    <property type="match status" value="1"/>
</dbReference>
<dbReference type="HAMAP" id="MF_00354">
    <property type="entry name" value="Idi_2"/>
    <property type="match status" value="1"/>
</dbReference>
<dbReference type="InterPro" id="IPR013785">
    <property type="entry name" value="Aldolase_TIM"/>
</dbReference>
<dbReference type="InterPro" id="IPR000262">
    <property type="entry name" value="FMN-dep_DH"/>
</dbReference>
<dbReference type="InterPro" id="IPR011179">
    <property type="entry name" value="IPdP_isomerase"/>
</dbReference>
<dbReference type="NCBIfam" id="TIGR02151">
    <property type="entry name" value="IPP_isom_2"/>
    <property type="match status" value="1"/>
</dbReference>
<dbReference type="PANTHER" id="PTHR43665">
    <property type="entry name" value="ISOPENTENYL-DIPHOSPHATE DELTA-ISOMERASE"/>
    <property type="match status" value="1"/>
</dbReference>
<dbReference type="PANTHER" id="PTHR43665:SF1">
    <property type="entry name" value="ISOPENTENYL-DIPHOSPHATE DELTA-ISOMERASE"/>
    <property type="match status" value="1"/>
</dbReference>
<dbReference type="Pfam" id="PF01070">
    <property type="entry name" value="FMN_dh"/>
    <property type="match status" value="1"/>
</dbReference>
<dbReference type="PIRSF" id="PIRSF003314">
    <property type="entry name" value="IPP_isomerase"/>
    <property type="match status" value="1"/>
</dbReference>
<dbReference type="SUPFAM" id="SSF51395">
    <property type="entry name" value="FMN-linked oxidoreductases"/>
    <property type="match status" value="1"/>
</dbReference>
<gene>
    <name evidence="1" type="primary">fni</name>
    <name type="ordered locus">sll1556</name>
</gene>
<keyword id="KW-0963">Cytoplasm</keyword>
<keyword id="KW-0285">Flavoprotein</keyword>
<keyword id="KW-0288">FMN</keyword>
<keyword id="KW-0413">Isomerase</keyword>
<keyword id="KW-0414">Isoprene biosynthesis</keyword>
<keyword id="KW-0460">Magnesium</keyword>
<keyword id="KW-0479">Metal-binding</keyword>
<keyword id="KW-0521">NADP</keyword>
<keyword id="KW-1185">Reference proteome</keyword>
<sequence>MDSTPHRKSDHIRIVLEEDVVGKGISTGFERLMLEHCALPAVDLDAVDLGLTLWGKSLTYPWLISSMTGGTPEAKQINLFLAEVAQALGIAMGLGSQRAAIENPDLAFTYQVRSVAPDILLFANLGLVQLNYGYGLEQAQRAVDMIEADALILHLNPLQEAVQPDGDRLWSGLWSKLEALVEALEVPVIVKEVGNGISGPVAKRLQECGVGAIDVAGAGGTSWSEVEAHRQTDRQAKEVAHNFADWGLPTAWSLQQVVQNTEQILVFASGGIRSGIDGAKAIALGATLVGSAAPVLAEAKINAQRVYDHYQARLRELQIAAFCCDAANLTQLAQVPLWDRQSGQRLTKP</sequence>
<reference key="1">
    <citation type="journal article" date="1996" name="DNA Res.">
        <title>Sequence analysis of the genome of the unicellular cyanobacterium Synechocystis sp. strain PCC6803. II. Sequence determination of the entire genome and assignment of potential protein-coding regions.</title>
        <authorList>
            <person name="Kaneko T."/>
            <person name="Sato S."/>
            <person name="Kotani H."/>
            <person name="Tanaka A."/>
            <person name="Asamizu E."/>
            <person name="Nakamura Y."/>
            <person name="Miyajima N."/>
            <person name="Hirosawa M."/>
            <person name="Sugiura M."/>
            <person name="Sasamoto S."/>
            <person name="Kimura T."/>
            <person name="Hosouchi T."/>
            <person name="Matsuno A."/>
            <person name="Muraki A."/>
            <person name="Nakazaki N."/>
            <person name="Naruo K."/>
            <person name="Okumura S."/>
            <person name="Shimpo S."/>
            <person name="Takeuchi C."/>
            <person name="Wada T."/>
            <person name="Watanabe A."/>
            <person name="Yamada M."/>
            <person name="Yasuda M."/>
            <person name="Tabata S."/>
        </authorList>
    </citation>
    <scope>NUCLEOTIDE SEQUENCE [LARGE SCALE GENOMIC DNA]</scope>
    <source>
        <strain>ATCC 27184 / PCC 6803 / Kazusa</strain>
    </source>
</reference>
<name>IDI2_SYNY3</name>
<accession>P74287</accession>